<name>MURE_HALH5</name>
<protein>
    <recommendedName>
        <fullName evidence="1">UDP-N-acetylmuramoyl-L-alanyl-D-glutamate--2,6-diaminopimelate ligase</fullName>
        <ecNumber evidence="1">6.3.2.13</ecNumber>
    </recommendedName>
    <alternativeName>
        <fullName evidence="1">Meso-A2pm-adding enzyme</fullName>
    </alternativeName>
    <alternativeName>
        <fullName evidence="1">Meso-diaminopimelate-adding enzyme</fullName>
    </alternativeName>
    <alternativeName>
        <fullName evidence="1">UDP-MurNAc-L-Ala-D-Glu:meso-diaminopimelate ligase</fullName>
    </alternativeName>
    <alternativeName>
        <fullName evidence="1">UDP-MurNAc-tripeptide synthetase</fullName>
    </alternativeName>
    <alternativeName>
        <fullName evidence="1">UDP-N-acetylmuramyl-tripeptide synthetase</fullName>
    </alternativeName>
</protein>
<feature type="chain" id="PRO_0000101865" description="UDP-N-acetylmuramoyl-L-alanyl-D-glutamate--2,6-diaminopimelate ligase">
    <location>
        <begin position="1"/>
        <end position="486"/>
    </location>
</feature>
<feature type="short sequence motif" description="Meso-diaminopimelate recognition motif">
    <location>
        <begin position="405"/>
        <end position="408"/>
    </location>
</feature>
<feature type="binding site" evidence="1">
    <location>
        <position position="31"/>
    </location>
    <ligand>
        <name>UDP-N-acetyl-alpha-D-muramoyl-L-alanyl-D-glutamate</name>
        <dbReference type="ChEBI" id="CHEBI:83900"/>
    </ligand>
</feature>
<feature type="binding site" evidence="1">
    <location>
        <begin position="109"/>
        <end position="115"/>
    </location>
    <ligand>
        <name>ATP</name>
        <dbReference type="ChEBI" id="CHEBI:30616"/>
    </ligand>
</feature>
<feature type="binding site" evidence="1">
    <location>
        <position position="150"/>
    </location>
    <ligand>
        <name>UDP-N-acetyl-alpha-D-muramoyl-L-alanyl-D-glutamate</name>
        <dbReference type="ChEBI" id="CHEBI:83900"/>
    </ligand>
</feature>
<feature type="binding site" evidence="1">
    <location>
        <begin position="151"/>
        <end position="152"/>
    </location>
    <ligand>
        <name>UDP-N-acetyl-alpha-D-muramoyl-L-alanyl-D-glutamate</name>
        <dbReference type="ChEBI" id="CHEBI:83900"/>
    </ligand>
</feature>
<feature type="binding site" evidence="1">
    <location>
        <position position="178"/>
    </location>
    <ligand>
        <name>UDP-N-acetyl-alpha-D-muramoyl-L-alanyl-D-glutamate</name>
        <dbReference type="ChEBI" id="CHEBI:83900"/>
    </ligand>
</feature>
<feature type="binding site" evidence="1">
    <location>
        <position position="186"/>
    </location>
    <ligand>
        <name>UDP-N-acetyl-alpha-D-muramoyl-L-alanyl-D-glutamate</name>
        <dbReference type="ChEBI" id="CHEBI:83900"/>
    </ligand>
</feature>
<feature type="binding site" evidence="1">
    <location>
        <position position="381"/>
    </location>
    <ligand>
        <name>meso-2,6-diaminopimelate</name>
        <dbReference type="ChEBI" id="CHEBI:57791"/>
    </ligand>
</feature>
<feature type="binding site" evidence="1">
    <location>
        <begin position="405"/>
        <end position="408"/>
    </location>
    <ligand>
        <name>meso-2,6-diaminopimelate</name>
        <dbReference type="ChEBI" id="CHEBI:57791"/>
    </ligand>
</feature>
<feature type="binding site" evidence="1">
    <location>
        <position position="455"/>
    </location>
    <ligand>
        <name>meso-2,6-diaminopimelate</name>
        <dbReference type="ChEBI" id="CHEBI:57791"/>
    </ligand>
</feature>
<feature type="binding site" evidence="1">
    <location>
        <position position="459"/>
    </location>
    <ligand>
        <name>meso-2,6-diaminopimelate</name>
        <dbReference type="ChEBI" id="CHEBI:57791"/>
    </ligand>
</feature>
<feature type="modified residue" description="N6-carboxylysine" evidence="1">
    <location>
        <position position="218"/>
    </location>
</feature>
<sequence length="486" mass="53658">MVKLVSLLDSLYGYKMIHEGNPDIHSIHMDSREVVEGGLFFCIKGYTVDGHDYAQQAVSNGAVAVVSERPLELSVPVVVVRDSRRAMAQVATKFYGEPTNDLQLIGVTGTNGKTTITHLIEKIMQDQGKMTGLIGTMYTKIGHELKETKNTTPESLVLQRTFADMKKSGVTTAMMEVSSHALQSGRVRGCDFDVAVFSNLTPDHLDYHGTMERYKFAKGLLFAQLGNTYQGKVAVLNADDPASADFAEMTIAQVVTYGIENEADFQAENVRITSTGTTFELAAFEERMELSIHLIGKFSVYNVLAAAAAAYVSGVPLQEIKKSLEEVKGVAGRFETVKHDQPFTVIVDYAHTPDSLENVLKTVGELAKGDVRVVVGCGGDRDKTKRPVMAEIATTFANQAIFTSDNPRSEEPMDILRDMEQGAKGDSYLMIEDRKEAIFKAIELAKEDDIIVIAGKGHETYQQFRDRTIDFDDRIVAQQAIKERWT</sequence>
<gene>
    <name evidence="1" type="primary">murE</name>
    <name type="ordered locus">BH2571</name>
</gene>
<dbReference type="EC" id="6.3.2.13" evidence="1"/>
<dbReference type="EMBL" id="BA000004">
    <property type="protein sequence ID" value="BAB06290.1"/>
    <property type="molecule type" value="Genomic_DNA"/>
</dbReference>
<dbReference type="PIR" id="C83971">
    <property type="entry name" value="C83971"/>
</dbReference>
<dbReference type="RefSeq" id="WP_010898722.1">
    <property type="nucleotide sequence ID" value="NC_002570.2"/>
</dbReference>
<dbReference type="SMR" id="Q9K9S4"/>
<dbReference type="STRING" id="272558.gene:10728469"/>
<dbReference type="KEGG" id="bha:BH2571"/>
<dbReference type="eggNOG" id="COG0769">
    <property type="taxonomic scope" value="Bacteria"/>
</dbReference>
<dbReference type="HOGENOM" id="CLU_022291_4_1_9"/>
<dbReference type="OrthoDB" id="9800958at2"/>
<dbReference type="UniPathway" id="UPA00219"/>
<dbReference type="Proteomes" id="UP000001258">
    <property type="component" value="Chromosome"/>
</dbReference>
<dbReference type="GO" id="GO:0005737">
    <property type="term" value="C:cytoplasm"/>
    <property type="evidence" value="ECO:0007669"/>
    <property type="project" value="UniProtKB-SubCell"/>
</dbReference>
<dbReference type="GO" id="GO:0005524">
    <property type="term" value="F:ATP binding"/>
    <property type="evidence" value="ECO:0007669"/>
    <property type="project" value="UniProtKB-UniRule"/>
</dbReference>
<dbReference type="GO" id="GO:0000287">
    <property type="term" value="F:magnesium ion binding"/>
    <property type="evidence" value="ECO:0007669"/>
    <property type="project" value="UniProtKB-UniRule"/>
</dbReference>
<dbReference type="GO" id="GO:0004326">
    <property type="term" value="F:tetrahydrofolylpolyglutamate synthase activity"/>
    <property type="evidence" value="ECO:0007669"/>
    <property type="project" value="InterPro"/>
</dbReference>
<dbReference type="GO" id="GO:0008765">
    <property type="term" value="F:UDP-N-acetylmuramoylalanyl-D-glutamate-2,6-diaminopimelate ligase activity"/>
    <property type="evidence" value="ECO:0007669"/>
    <property type="project" value="UniProtKB-UniRule"/>
</dbReference>
<dbReference type="GO" id="GO:0051301">
    <property type="term" value="P:cell division"/>
    <property type="evidence" value="ECO:0007669"/>
    <property type="project" value="UniProtKB-KW"/>
</dbReference>
<dbReference type="GO" id="GO:0071555">
    <property type="term" value="P:cell wall organization"/>
    <property type="evidence" value="ECO:0007669"/>
    <property type="project" value="UniProtKB-KW"/>
</dbReference>
<dbReference type="GO" id="GO:0009252">
    <property type="term" value="P:peptidoglycan biosynthetic process"/>
    <property type="evidence" value="ECO:0007669"/>
    <property type="project" value="UniProtKB-UniRule"/>
</dbReference>
<dbReference type="GO" id="GO:0008360">
    <property type="term" value="P:regulation of cell shape"/>
    <property type="evidence" value="ECO:0007669"/>
    <property type="project" value="UniProtKB-KW"/>
</dbReference>
<dbReference type="FunFam" id="3.40.1390.10:FF:000005">
    <property type="entry name" value="UDP-N-acetylmuramoyl-L-alanyl-D-glutamate--2,6-diaminopimelate ligase"/>
    <property type="match status" value="1"/>
</dbReference>
<dbReference type="FunFam" id="3.90.190.20:FF:000006">
    <property type="entry name" value="UDP-N-acetylmuramoyl-L-alanyl-D-glutamate--2,6-diaminopimelate ligase"/>
    <property type="match status" value="1"/>
</dbReference>
<dbReference type="Gene3D" id="3.90.190.20">
    <property type="entry name" value="Mur ligase, C-terminal domain"/>
    <property type="match status" value="1"/>
</dbReference>
<dbReference type="Gene3D" id="3.40.1190.10">
    <property type="entry name" value="Mur-like, catalytic domain"/>
    <property type="match status" value="1"/>
</dbReference>
<dbReference type="Gene3D" id="3.40.1390.10">
    <property type="entry name" value="MurE/MurF, N-terminal domain"/>
    <property type="match status" value="1"/>
</dbReference>
<dbReference type="HAMAP" id="MF_00208">
    <property type="entry name" value="MurE"/>
    <property type="match status" value="1"/>
</dbReference>
<dbReference type="InterPro" id="IPR018109">
    <property type="entry name" value="Folylpolyglutamate_synth_CS"/>
</dbReference>
<dbReference type="InterPro" id="IPR036565">
    <property type="entry name" value="Mur-like_cat_sf"/>
</dbReference>
<dbReference type="InterPro" id="IPR004101">
    <property type="entry name" value="Mur_ligase_C"/>
</dbReference>
<dbReference type="InterPro" id="IPR036615">
    <property type="entry name" value="Mur_ligase_C_dom_sf"/>
</dbReference>
<dbReference type="InterPro" id="IPR013221">
    <property type="entry name" value="Mur_ligase_cen"/>
</dbReference>
<dbReference type="InterPro" id="IPR000713">
    <property type="entry name" value="Mur_ligase_N"/>
</dbReference>
<dbReference type="InterPro" id="IPR035911">
    <property type="entry name" value="MurE/MurF_N"/>
</dbReference>
<dbReference type="InterPro" id="IPR005761">
    <property type="entry name" value="UDP-N-AcMur-Glu-dNH2Pim_ligase"/>
</dbReference>
<dbReference type="NCBIfam" id="TIGR01085">
    <property type="entry name" value="murE"/>
    <property type="match status" value="1"/>
</dbReference>
<dbReference type="NCBIfam" id="NF001124">
    <property type="entry name" value="PRK00139.1-2"/>
    <property type="match status" value="1"/>
</dbReference>
<dbReference type="NCBIfam" id="NF001126">
    <property type="entry name" value="PRK00139.1-4"/>
    <property type="match status" value="1"/>
</dbReference>
<dbReference type="PANTHER" id="PTHR23135">
    <property type="entry name" value="MUR LIGASE FAMILY MEMBER"/>
    <property type="match status" value="1"/>
</dbReference>
<dbReference type="PANTHER" id="PTHR23135:SF4">
    <property type="entry name" value="UDP-N-ACETYLMURAMOYL-L-ALANYL-D-GLUTAMATE--2,6-DIAMINOPIMELATE LIGASE MURE HOMOLOG, CHLOROPLASTIC"/>
    <property type="match status" value="1"/>
</dbReference>
<dbReference type="Pfam" id="PF01225">
    <property type="entry name" value="Mur_ligase"/>
    <property type="match status" value="1"/>
</dbReference>
<dbReference type="Pfam" id="PF02875">
    <property type="entry name" value="Mur_ligase_C"/>
    <property type="match status" value="1"/>
</dbReference>
<dbReference type="Pfam" id="PF08245">
    <property type="entry name" value="Mur_ligase_M"/>
    <property type="match status" value="1"/>
</dbReference>
<dbReference type="SUPFAM" id="SSF53623">
    <property type="entry name" value="MurD-like peptide ligases, catalytic domain"/>
    <property type="match status" value="1"/>
</dbReference>
<dbReference type="SUPFAM" id="SSF53244">
    <property type="entry name" value="MurD-like peptide ligases, peptide-binding domain"/>
    <property type="match status" value="1"/>
</dbReference>
<dbReference type="SUPFAM" id="SSF63418">
    <property type="entry name" value="MurE/MurF N-terminal domain"/>
    <property type="match status" value="1"/>
</dbReference>
<keyword id="KW-0067">ATP-binding</keyword>
<keyword id="KW-0131">Cell cycle</keyword>
<keyword id="KW-0132">Cell division</keyword>
<keyword id="KW-0133">Cell shape</keyword>
<keyword id="KW-0961">Cell wall biogenesis/degradation</keyword>
<keyword id="KW-0963">Cytoplasm</keyword>
<keyword id="KW-0436">Ligase</keyword>
<keyword id="KW-0460">Magnesium</keyword>
<keyword id="KW-0547">Nucleotide-binding</keyword>
<keyword id="KW-0573">Peptidoglycan synthesis</keyword>
<keyword id="KW-1185">Reference proteome</keyword>
<reference key="1">
    <citation type="journal article" date="2000" name="Nucleic Acids Res.">
        <title>Complete genome sequence of the alkaliphilic bacterium Bacillus halodurans and genomic sequence comparison with Bacillus subtilis.</title>
        <authorList>
            <person name="Takami H."/>
            <person name="Nakasone K."/>
            <person name="Takaki Y."/>
            <person name="Maeno G."/>
            <person name="Sasaki R."/>
            <person name="Masui N."/>
            <person name="Fuji F."/>
            <person name="Hirama C."/>
            <person name="Nakamura Y."/>
            <person name="Ogasawara N."/>
            <person name="Kuhara S."/>
            <person name="Horikoshi K."/>
        </authorList>
    </citation>
    <scope>NUCLEOTIDE SEQUENCE [LARGE SCALE GENOMIC DNA]</scope>
    <source>
        <strain>ATCC BAA-125 / DSM 18197 / FERM 7344 / JCM 9153 / C-125</strain>
    </source>
</reference>
<accession>Q9K9S4</accession>
<comment type="function">
    <text evidence="1">Catalyzes the addition of meso-diaminopimelic acid to the nucleotide precursor UDP-N-acetylmuramoyl-L-alanyl-D-glutamate (UMAG) in the biosynthesis of bacterial cell-wall peptidoglycan.</text>
</comment>
<comment type="catalytic activity">
    <reaction evidence="1">
        <text>UDP-N-acetyl-alpha-D-muramoyl-L-alanyl-D-glutamate + meso-2,6-diaminopimelate + ATP = UDP-N-acetyl-alpha-D-muramoyl-L-alanyl-gamma-D-glutamyl-meso-2,6-diaminopimelate + ADP + phosphate + H(+)</text>
        <dbReference type="Rhea" id="RHEA:23676"/>
        <dbReference type="ChEBI" id="CHEBI:15378"/>
        <dbReference type="ChEBI" id="CHEBI:30616"/>
        <dbReference type="ChEBI" id="CHEBI:43474"/>
        <dbReference type="ChEBI" id="CHEBI:57791"/>
        <dbReference type="ChEBI" id="CHEBI:83900"/>
        <dbReference type="ChEBI" id="CHEBI:83905"/>
        <dbReference type="ChEBI" id="CHEBI:456216"/>
        <dbReference type="EC" id="6.3.2.13"/>
    </reaction>
</comment>
<comment type="cofactor">
    <cofactor evidence="1">
        <name>Mg(2+)</name>
        <dbReference type="ChEBI" id="CHEBI:18420"/>
    </cofactor>
</comment>
<comment type="pathway">
    <text evidence="1">Cell wall biogenesis; peptidoglycan biosynthesis.</text>
</comment>
<comment type="subcellular location">
    <subcellularLocation>
        <location evidence="1">Cytoplasm</location>
    </subcellularLocation>
</comment>
<comment type="PTM">
    <text evidence="1">Carboxylation is probably crucial for Mg(2+) binding and, consequently, for the gamma-phosphate positioning of ATP.</text>
</comment>
<comment type="similarity">
    <text evidence="1">Belongs to the MurCDEF family. MurE subfamily.</text>
</comment>
<proteinExistence type="inferred from homology"/>
<evidence type="ECO:0000255" key="1">
    <source>
        <dbReference type="HAMAP-Rule" id="MF_00208"/>
    </source>
</evidence>
<organism>
    <name type="scientific">Halalkalibacterium halodurans (strain ATCC BAA-125 / DSM 18197 / FERM 7344 / JCM 9153 / C-125)</name>
    <name type="common">Bacillus halodurans</name>
    <dbReference type="NCBI Taxonomy" id="272558"/>
    <lineage>
        <taxon>Bacteria</taxon>
        <taxon>Bacillati</taxon>
        <taxon>Bacillota</taxon>
        <taxon>Bacilli</taxon>
        <taxon>Bacillales</taxon>
        <taxon>Bacillaceae</taxon>
        <taxon>Halalkalibacterium (ex Joshi et al. 2022)</taxon>
    </lineage>
</organism>